<accession>Q6A6Q9</accession>
<keyword id="KW-0002">3D-structure</keyword>
<keyword id="KW-0687">Ribonucleoprotein</keyword>
<keyword id="KW-0689">Ribosomal protein</keyword>
<keyword id="KW-0694">RNA-binding</keyword>
<keyword id="KW-0699">rRNA-binding</keyword>
<sequence length="135" mass="14166">MATAGHKGAPKTKVRRKEKKNVVAGQAHIKSTFNNTIIAITDPSGAVISWASAGTVGFKGSRKSTPFAAQMAAEAAGRRAMEHGMKRVDVFVKGPGSGRETAIRSLGAVGLEIGPISDVTPVPHNGCRPPKRRRV</sequence>
<evidence type="ECO:0000255" key="1">
    <source>
        <dbReference type="HAMAP-Rule" id="MF_01310"/>
    </source>
</evidence>
<evidence type="ECO:0000305" key="2"/>
<evidence type="ECO:0007829" key="3">
    <source>
        <dbReference type="PDB" id="8CWO"/>
    </source>
</evidence>
<gene>
    <name evidence="1" type="primary">rpsK</name>
    <name type="ordered locus">PPA1828</name>
</gene>
<dbReference type="EMBL" id="AE017283">
    <property type="protein sequence ID" value="AAT83554.1"/>
    <property type="molecule type" value="Genomic_DNA"/>
</dbReference>
<dbReference type="RefSeq" id="WP_002514833.1">
    <property type="nucleotide sequence ID" value="NZ_CP025935.1"/>
</dbReference>
<dbReference type="PDB" id="8CRX">
    <property type="method" value="EM"/>
    <property type="resolution" value="2.78 A"/>
    <property type="chains" value="K=1-135"/>
</dbReference>
<dbReference type="PDB" id="8CWO">
    <property type="method" value="EM"/>
    <property type="resolution" value="2.84 A"/>
    <property type="chains" value="K=1-135"/>
</dbReference>
<dbReference type="PDBsum" id="8CRX"/>
<dbReference type="PDBsum" id="8CWO"/>
<dbReference type="SMR" id="Q6A6Q9"/>
<dbReference type="EnsemblBacteria" id="AAT83554">
    <property type="protein sequence ID" value="AAT83554"/>
    <property type="gene ID" value="PPA1828"/>
</dbReference>
<dbReference type="GeneID" id="92857779"/>
<dbReference type="KEGG" id="pac:PPA1828"/>
<dbReference type="eggNOG" id="COG0100">
    <property type="taxonomic scope" value="Bacteria"/>
</dbReference>
<dbReference type="HOGENOM" id="CLU_072439_5_0_11"/>
<dbReference type="Proteomes" id="UP000000603">
    <property type="component" value="Chromosome"/>
</dbReference>
<dbReference type="GO" id="GO:1990904">
    <property type="term" value="C:ribonucleoprotein complex"/>
    <property type="evidence" value="ECO:0007669"/>
    <property type="project" value="UniProtKB-KW"/>
</dbReference>
<dbReference type="GO" id="GO:0005840">
    <property type="term" value="C:ribosome"/>
    <property type="evidence" value="ECO:0007669"/>
    <property type="project" value="UniProtKB-KW"/>
</dbReference>
<dbReference type="GO" id="GO:0019843">
    <property type="term" value="F:rRNA binding"/>
    <property type="evidence" value="ECO:0007669"/>
    <property type="project" value="UniProtKB-UniRule"/>
</dbReference>
<dbReference type="GO" id="GO:0003735">
    <property type="term" value="F:structural constituent of ribosome"/>
    <property type="evidence" value="ECO:0007669"/>
    <property type="project" value="InterPro"/>
</dbReference>
<dbReference type="GO" id="GO:0006412">
    <property type="term" value="P:translation"/>
    <property type="evidence" value="ECO:0007669"/>
    <property type="project" value="UniProtKB-UniRule"/>
</dbReference>
<dbReference type="FunFam" id="3.30.420.80:FF:000001">
    <property type="entry name" value="30S ribosomal protein S11"/>
    <property type="match status" value="1"/>
</dbReference>
<dbReference type="Gene3D" id="3.30.420.80">
    <property type="entry name" value="Ribosomal protein S11"/>
    <property type="match status" value="1"/>
</dbReference>
<dbReference type="HAMAP" id="MF_01310">
    <property type="entry name" value="Ribosomal_uS11"/>
    <property type="match status" value="1"/>
</dbReference>
<dbReference type="InterPro" id="IPR001971">
    <property type="entry name" value="Ribosomal_uS11"/>
</dbReference>
<dbReference type="InterPro" id="IPR019981">
    <property type="entry name" value="Ribosomal_uS11_bac-type"/>
</dbReference>
<dbReference type="InterPro" id="IPR018102">
    <property type="entry name" value="Ribosomal_uS11_CS"/>
</dbReference>
<dbReference type="InterPro" id="IPR036967">
    <property type="entry name" value="Ribosomal_uS11_sf"/>
</dbReference>
<dbReference type="NCBIfam" id="NF003698">
    <property type="entry name" value="PRK05309.1"/>
    <property type="match status" value="1"/>
</dbReference>
<dbReference type="NCBIfam" id="TIGR03632">
    <property type="entry name" value="uS11_bact"/>
    <property type="match status" value="1"/>
</dbReference>
<dbReference type="PANTHER" id="PTHR11759">
    <property type="entry name" value="40S RIBOSOMAL PROTEIN S14/30S RIBOSOMAL PROTEIN S11"/>
    <property type="match status" value="1"/>
</dbReference>
<dbReference type="Pfam" id="PF00411">
    <property type="entry name" value="Ribosomal_S11"/>
    <property type="match status" value="1"/>
</dbReference>
<dbReference type="PIRSF" id="PIRSF002131">
    <property type="entry name" value="Ribosomal_S11"/>
    <property type="match status" value="1"/>
</dbReference>
<dbReference type="SUPFAM" id="SSF53137">
    <property type="entry name" value="Translational machinery components"/>
    <property type="match status" value="1"/>
</dbReference>
<dbReference type="PROSITE" id="PS00054">
    <property type="entry name" value="RIBOSOMAL_S11"/>
    <property type="match status" value="1"/>
</dbReference>
<organism>
    <name type="scientific">Cutibacterium acnes (strain DSM 16379 / KPA171202)</name>
    <name type="common">Propionibacterium acnes</name>
    <dbReference type="NCBI Taxonomy" id="267747"/>
    <lineage>
        <taxon>Bacteria</taxon>
        <taxon>Bacillati</taxon>
        <taxon>Actinomycetota</taxon>
        <taxon>Actinomycetes</taxon>
        <taxon>Propionibacteriales</taxon>
        <taxon>Propionibacteriaceae</taxon>
        <taxon>Cutibacterium</taxon>
    </lineage>
</organism>
<proteinExistence type="evidence at protein level"/>
<reference key="1">
    <citation type="journal article" date="2004" name="Science">
        <title>The complete genome sequence of Propionibacterium acnes, a commensal of human skin.</title>
        <authorList>
            <person name="Brueggemann H."/>
            <person name="Henne A."/>
            <person name="Hoster F."/>
            <person name="Liesegang H."/>
            <person name="Wiezer A."/>
            <person name="Strittmatter A."/>
            <person name="Hujer S."/>
            <person name="Duerre P."/>
            <person name="Gottschalk G."/>
        </authorList>
    </citation>
    <scope>NUCLEOTIDE SEQUENCE [LARGE SCALE GENOMIC DNA]</scope>
    <source>
        <strain>DSM 16379 / KPA171202</strain>
    </source>
</reference>
<name>RS11_CUTAK</name>
<feature type="chain" id="PRO_0000123197" description="Small ribosomal subunit protein uS11">
    <location>
        <begin position="1"/>
        <end position="135"/>
    </location>
</feature>
<feature type="strand" evidence="3">
    <location>
        <begin position="26"/>
        <end position="31"/>
    </location>
</feature>
<feature type="strand" evidence="3">
    <location>
        <begin position="36"/>
        <end position="41"/>
    </location>
</feature>
<feature type="strand" evidence="3">
    <location>
        <begin position="47"/>
        <end position="52"/>
    </location>
</feature>
<feature type="turn" evidence="3">
    <location>
        <begin position="53"/>
        <end position="55"/>
    </location>
</feature>
<feature type="helix" evidence="3">
    <location>
        <begin position="60"/>
        <end position="63"/>
    </location>
</feature>
<feature type="helix" evidence="3">
    <location>
        <begin position="66"/>
        <end position="82"/>
    </location>
</feature>
<feature type="strand" evidence="3">
    <location>
        <begin position="88"/>
        <end position="95"/>
    </location>
</feature>
<feature type="helix" evidence="3">
    <location>
        <begin position="99"/>
        <end position="109"/>
    </location>
</feature>
<protein>
    <recommendedName>
        <fullName evidence="1">Small ribosomal subunit protein uS11</fullName>
    </recommendedName>
    <alternativeName>
        <fullName evidence="2">30S ribosomal protein S11</fullName>
    </alternativeName>
</protein>
<comment type="function">
    <text evidence="1">Located on the platform of the 30S subunit, it bridges several disparate RNA helices of the 16S rRNA. Forms part of the Shine-Dalgarno cleft in the 70S ribosome.</text>
</comment>
<comment type="subunit">
    <text evidence="1">Part of the 30S ribosomal subunit. Interacts with proteins S7 and S18. Binds to IF-3.</text>
</comment>
<comment type="similarity">
    <text evidence="1">Belongs to the universal ribosomal protein uS11 family.</text>
</comment>